<comment type="function">
    <text evidence="2 6 7">Part of the ESX-3 specialized secretion system, which is important for iron and zinc uptake or homeostasis (PubMed:19684129, PubMed:24155985). EccA3 exhibits ATPase activity and may provide energy for the export of ESX-3 substrates (By similarity).</text>
</comment>
<comment type="subunit">
    <text evidence="2">Part of the ESX-3 / type VII secretion system (T7SS), which is composed of cytosolic and membrane components.</text>
</comment>
<comment type="subcellular location">
    <subcellularLocation>
        <location evidence="1">Cytoplasm</location>
    </subcellularLocation>
</comment>
<comment type="induction">
    <text evidence="4 5">Repressed by IdeR in the presence of iron and by Zur in the presence of zinc.</text>
</comment>
<comment type="similarity">
    <text evidence="9">Belongs to the CbxX/CfxQ family.</text>
</comment>
<reference key="1">
    <citation type="journal article" date="1998" name="Nature">
        <title>Deciphering the biology of Mycobacterium tuberculosis from the complete genome sequence.</title>
        <authorList>
            <person name="Cole S.T."/>
            <person name="Brosch R."/>
            <person name="Parkhill J."/>
            <person name="Garnier T."/>
            <person name="Churcher C.M."/>
            <person name="Harris D.E."/>
            <person name="Gordon S.V."/>
            <person name="Eiglmeier K."/>
            <person name="Gas S."/>
            <person name="Barry C.E. III"/>
            <person name="Tekaia F."/>
            <person name="Badcock K."/>
            <person name="Basham D."/>
            <person name="Brown D."/>
            <person name="Chillingworth T."/>
            <person name="Connor R."/>
            <person name="Davies R.M."/>
            <person name="Devlin K."/>
            <person name="Feltwell T."/>
            <person name="Gentles S."/>
            <person name="Hamlin N."/>
            <person name="Holroyd S."/>
            <person name="Hornsby T."/>
            <person name="Jagels K."/>
            <person name="Krogh A."/>
            <person name="McLean J."/>
            <person name="Moule S."/>
            <person name="Murphy L.D."/>
            <person name="Oliver S."/>
            <person name="Osborne J."/>
            <person name="Quail M.A."/>
            <person name="Rajandream M.A."/>
            <person name="Rogers J."/>
            <person name="Rutter S."/>
            <person name="Seeger K."/>
            <person name="Skelton S."/>
            <person name="Squares S."/>
            <person name="Squares R."/>
            <person name="Sulston J.E."/>
            <person name="Taylor K."/>
            <person name="Whitehead S."/>
            <person name="Barrell B.G."/>
        </authorList>
    </citation>
    <scope>NUCLEOTIDE SEQUENCE [LARGE SCALE GENOMIC DNA]</scope>
    <source>
        <strain>ATCC 25618 / H37Rv</strain>
    </source>
</reference>
<reference key="2">
    <citation type="journal article" date="2002" name="Infect. Immun.">
        <title>IdeR, an essential gene in Mycobacterium tuberculosis: role of IdeR in iron-dependent gene expression, iron metabolism, and oxidative stress response.</title>
        <authorList>
            <person name="Rodriguez G.M."/>
            <person name="Voskuil M.I."/>
            <person name="Gold B."/>
            <person name="Schoolnik G.K."/>
            <person name="Smith I."/>
        </authorList>
    </citation>
    <scope>INDUCTION</scope>
</reference>
<reference key="3">
    <citation type="journal article" date="2007" name="J. Bacteriol.">
        <title>Global analysis of the Mycobacterium tuberculosis Zur (FurB) regulon.</title>
        <authorList>
            <person name="Maciag A."/>
            <person name="Dainese E."/>
            <person name="Rodriguez G.M."/>
            <person name="Milano A."/>
            <person name="Provvedi R."/>
            <person name="Pasca M.R."/>
            <person name="Smith I."/>
            <person name="Palu G."/>
            <person name="Riccardi G."/>
            <person name="Manganelli R."/>
        </authorList>
    </citation>
    <scope>INDUCTION</scope>
</reference>
<reference key="4">
    <citation type="journal article" date="2009" name="J. Bacteriol.">
        <title>Characterization of a Mycobacterium tuberculosis ESX-3 conditional mutant: essentiality and rescue by iron and zinc.</title>
        <authorList>
            <person name="Serafini A."/>
            <person name="Boldrin F."/>
            <person name="Palu G."/>
            <person name="Manganelli R."/>
        </authorList>
    </citation>
    <scope>FUNCTION</scope>
    <source>
        <strain>H37Rv</strain>
    </source>
</reference>
<reference key="5">
    <citation type="journal article" date="2009" name="PLoS Pathog.">
        <title>Systematic genetic nomenclature for type VII secretion systems.</title>
        <authorList>
            <person name="Bitter W."/>
            <person name="Houben E.N."/>
            <person name="Bottai D."/>
            <person name="Brodin P."/>
            <person name="Brown E.J."/>
            <person name="Cox J.S."/>
            <person name="Derbyshire K."/>
            <person name="Fortune S.M."/>
            <person name="Gao L.Y."/>
            <person name="Liu J."/>
            <person name="Gey van Pittius N.C."/>
            <person name="Pym A.S."/>
            <person name="Rubin E.J."/>
            <person name="Sherman D.R."/>
            <person name="Cole S.T."/>
            <person name="Brosch R."/>
        </authorList>
    </citation>
    <scope>NOMENCLATURE</scope>
</reference>
<reference key="6">
    <citation type="journal article" date="2011" name="Mol. Cell. Proteomics">
        <title>Proteogenomic analysis of Mycobacterium tuberculosis by high resolution mass spectrometry.</title>
        <authorList>
            <person name="Kelkar D.S."/>
            <person name="Kumar D."/>
            <person name="Kumar P."/>
            <person name="Balakrishnan L."/>
            <person name="Muthusamy B."/>
            <person name="Yadav A.K."/>
            <person name="Shrivastava P."/>
            <person name="Marimuthu A."/>
            <person name="Anand S."/>
            <person name="Sundaram H."/>
            <person name="Kingsbury R."/>
            <person name="Harsha H.C."/>
            <person name="Nair B."/>
            <person name="Prasad T.S."/>
            <person name="Chauhan D.S."/>
            <person name="Katoch K."/>
            <person name="Katoch V.M."/>
            <person name="Kumar P."/>
            <person name="Chaerkady R."/>
            <person name="Ramachandran S."/>
            <person name="Dash D."/>
            <person name="Pandey A."/>
        </authorList>
    </citation>
    <scope>IDENTIFICATION BY MASS SPECTROMETRY [LARGE SCALE ANALYSIS]</scope>
    <source>
        <strain>ATCC 25618 / H37Rv</strain>
    </source>
</reference>
<reference key="7">
    <citation type="journal article" date="2013" name="PLoS ONE">
        <title>The ESX-3 secretion system is necessary for iron and zinc homeostasis in Mycobacterium tuberculosis.</title>
        <authorList>
            <person name="Serafini A."/>
            <person name="Pisu D."/>
            <person name="Palu G."/>
            <person name="Rodriguez G.M."/>
            <person name="Manganelli R."/>
        </authorList>
    </citation>
    <scope>FUNCTION</scope>
</reference>
<gene>
    <name evidence="8" type="primary">eccA3</name>
    <name type="ordered locus">Rv0282</name>
    <name type="ORF">MTV035.10</name>
</gene>
<protein>
    <recommendedName>
        <fullName evidence="9">ESX-3 secretion system protein EccA3</fullName>
    </recommendedName>
    <alternativeName>
        <fullName evidence="9">ESX conserved component A3</fullName>
    </alternativeName>
    <alternativeName>
        <fullName evidence="9">Type VII secretion system protein EccA3</fullName>
        <shortName evidence="9">T7SS protein EccA3</shortName>
    </alternativeName>
</protein>
<keyword id="KW-0067">ATP-binding</keyword>
<keyword id="KW-0963">Cytoplasm</keyword>
<keyword id="KW-0547">Nucleotide-binding</keyword>
<keyword id="KW-1185">Reference proteome</keyword>
<evidence type="ECO:0000250" key="1">
    <source>
        <dbReference type="UniProtKB" id="B2HSU9"/>
    </source>
</evidence>
<evidence type="ECO:0000250" key="2">
    <source>
        <dbReference type="UniProtKB" id="P9WPH9"/>
    </source>
</evidence>
<evidence type="ECO:0000255" key="3"/>
<evidence type="ECO:0000269" key="4">
    <source>
    </source>
</evidence>
<evidence type="ECO:0000269" key="5">
    <source>
    </source>
</evidence>
<evidence type="ECO:0000269" key="6">
    <source>
    </source>
</evidence>
<evidence type="ECO:0000269" key="7">
    <source>
    </source>
</evidence>
<evidence type="ECO:0000303" key="8">
    <source>
    </source>
</evidence>
<evidence type="ECO:0000305" key="9"/>
<accession>P9WPI3</accession>
<accession>L0T677</accession>
<accession>O53687</accession>
<feature type="chain" id="PRO_0000063045" description="ESX-3 secretion system protein EccA3">
    <location>
        <begin position="1"/>
        <end position="631"/>
    </location>
</feature>
<feature type="binding site" evidence="3">
    <location>
        <begin position="385"/>
        <end position="392"/>
    </location>
    <ligand>
        <name>ATP</name>
        <dbReference type="ChEBI" id="CHEBI:30616"/>
    </ligand>
</feature>
<sequence length="631" mass="68107">MAGVGEGDSGGVERDDIGMVAASPVASRVNGKVDADVVGRFATCCRALGIAVYQRKRPPDLAAARSGFAALTRVAHDQCDAWTGLAAAGDQSIGVLEAASRTATTAGVLQRQVELADNALGFLYDTGLYLRFRATGPDDFHLAYAAALASTGGPEEFAKANHVVSGITERRAGWRAARWLAVVINYRAERWSDVVKLLTPMVNDPDLDEAFSHAAKITLGTALARLGMFAPALSYLEEPDGPVAVAAVDGALAKALVLRAHVDEESASEVLQDLYAAHPENEQVEQALSDTSFGIVTTTAGRIEARTDPWDPATEPGAEDFVDPAAHERKAALLHEAELQLAEFIGLDEVKRQVSRLKSSVAMELVRKQRGLTVAQRTHHLVFAGPPGTGKTTIARVVAKIYCGLGLLKRENIREVHRADLIGQHIGETEAKTNAIIDSALDGVLFLDEAYALVATGAKNDFGLVAIDTLLARMENDRDRLVVIIAGYRADLDKFLDTNEGLRSRFTRNIDFPSYTSHELVEIAHKMAEQRDSVFEQSALHDLEALFAKLAAESTPDTNGISRRSLDIAGNGRFVRNIVERSEEEREFRLDHSEHAGSGEFSDEELMTITADDVGRSVEPLLRGLGLSVRA</sequence>
<name>ECCA3_MYCTU</name>
<dbReference type="EMBL" id="AL123456">
    <property type="protein sequence ID" value="CCP43012.1"/>
    <property type="molecule type" value="Genomic_DNA"/>
</dbReference>
<dbReference type="PIR" id="H70835">
    <property type="entry name" value="H70835"/>
</dbReference>
<dbReference type="RefSeq" id="NP_214796.1">
    <property type="nucleotide sequence ID" value="NC_000962.3"/>
</dbReference>
<dbReference type="RefSeq" id="WP_003898392.1">
    <property type="nucleotide sequence ID" value="NC_000962.3"/>
</dbReference>
<dbReference type="SMR" id="P9WPI3"/>
<dbReference type="STRING" id="83332.Rv0282"/>
<dbReference type="PaxDb" id="83332-Rv0282"/>
<dbReference type="DNASU" id="886613"/>
<dbReference type="GeneID" id="886613"/>
<dbReference type="KEGG" id="mtu:Rv0282"/>
<dbReference type="KEGG" id="mtv:RVBD_0282"/>
<dbReference type="PATRIC" id="fig|83332.111.peg.318"/>
<dbReference type="TubercuList" id="Rv0282"/>
<dbReference type="eggNOG" id="COG0464">
    <property type="taxonomic scope" value="Bacteria"/>
</dbReference>
<dbReference type="InParanoid" id="P9WPI3"/>
<dbReference type="OrthoDB" id="9806903at2"/>
<dbReference type="PhylomeDB" id="P9WPI3"/>
<dbReference type="Proteomes" id="UP000001584">
    <property type="component" value="Chromosome"/>
</dbReference>
<dbReference type="GO" id="GO:0005829">
    <property type="term" value="C:cytosol"/>
    <property type="evidence" value="ECO:0007005"/>
    <property type="project" value="MTBBASE"/>
</dbReference>
<dbReference type="GO" id="GO:0009274">
    <property type="term" value="C:peptidoglycan-based cell wall"/>
    <property type="evidence" value="ECO:0007005"/>
    <property type="project" value="MTBBASE"/>
</dbReference>
<dbReference type="GO" id="GO:0005886">
    <property type="term" value="C:plasma membrane"/>
    <property type="evidence" value="ECO:0007005"/>
    <property type="project" value="MTBBASE"/>
</dbReference>
<dbReference type="GO" id="GO:0005524">
    <property type="term" value="F:ATP binding"/>
    <property type="evidence" value="ECO:0007669"/>
    <property type="project" value="UniProtKB-KW"/>
</dbReference>
<dbReference type="GO" id="GO:0016887">
    <property type="term" value="F:ATP hydrolysis activity"/>
    <property type="evidence" value="ECO:0000318"/>
    <property type="project" value="GO_Central"/>
</dbReference>
<dbReference type="GO" id="GO:0010106">
    <property type="term" value="P:cellular response to iron ion starvation"/>
    <property type="evidence" value="ECO:0000270"/>
    <property type="project" value="MTBBASE"/>
</dbReference>
<dbReference type="GO" id="GO:0006879">
    <property type="term" value="P:intracellular iron ion homeostasis"/>
    <property type="evidence" value="ECO:0000314"/>
    <property type="project" value="GO_Central"/>
</dbReference>
<dbReference type="GO" id="GO:0006882">
    <property type="term" value="P:intracellular zinc ion homeostasis"/>
    <property type="evidence" value="ECO:0000314"/>
    <property type="project" value="GO_Central"/>
</dbReference>
<dbReference type="GO" id="GO:0033214">
    <property type="term" value="P:siderophore-dependent iron import into cell"/>
    <property type="evidence" value="ECO:0000315"/>
    <property type="project" value="MTBBASE"/>
</dbReference>
<dbReference type="CDD" id="cd00009">
    <property type="entry name" value="AAA"/>
    <property type="match status" value="1"/>
</dbReference>
<dbReference type="FunFam" id="3.40.50.300:FF:000216">
    <property type="entry name" value="Type VII secretion ATPase EccA"/>
    <property type="match status" value="1"/>
</dbReference>
<dbReference type="Gene3D" id="1.10.8.60">
    <property type="match status" value="1"/>
</dbReference>
<dbReference type="Gene3D" id="3.40.50.300">
    <property type="entry name" value="P-loop containing nucleotide triphosphate hydrolases"/>
    <property type="match status" value="1"/>
</dbReference>
<dbReference type="Gene3D" id="1.25.40.10">
    <property type="entry name" value="Tetratricopeptide repeat domain"/>
    <property type="match status" value="1"/>
</dbReference>
<dbReference type="InterPro" id="IPR003593">
    <property type="entry name" value="AAA+_ATPase"/>
</dbReference>
<dbReference type="InterPro" id="IPR041627">
    <property type="entry name" value="AAA_lid_6"/>
</dbReference>
<dbReference type="InterPro" id="IPR003959">
    <property type="entry name" value="ATPase_AAA_core"/>
</dbReference>
<dbReference type="InterPro" id="IPR000641">
    <property type="entry name" value="CbxX/CfxQ"/>
</dbReference>
<dbReference type="InterPro" id="IPR050773">
    <property type="entry name" value="CbxX/CfxQ_RuBisCO_ESX"/>
</dbReference>
<dbReference type="InterPro" id="IPR027417">
    <property type="entry name" value="P-loop_NTPase"/>
</dbReference>
<dbReference type="InterPro" id="IPR023835">
    <property type="entry name" value="T7SS_EccA"/>
</dbReference>
<dbReference type="InterPro" id="IPR049078">
    <property type="entry name" value="T7SS_EccA1-like_N"/>
</dbReference>
<dbReference type="InterPro" id="IPR011990">
    <property type="entry name" value="TPR-like_helical_dom_sf"/>
</dbReference>
<dbReference type="NCBIfam" id="TIGR03922">
    <property type="entry name" value="T7SS_EccA"/>
    <property type="match status" value="1"/>
</dbReference>
<dbReference type="PANTHER" id="PTHR43392">
    <property type="entry name" value="AAA-TYPE ATPASE FAMILY PROTEIN / ANKYRIN REPEAT FAMILY PROTEIN"/>
    <property type="match status" value="1"/>
</dbReference>
<dbReference type="PANTHER" id="PTHR43392:SF2">
    <property type="entry name" value="AAA-TYPE ATPASE FAMILY PROTEIN _ ANKYRIN REPEAT FAMILY PROTEIN"/>
    <property type="match status" value="1"/>
</dbReference>
<dbReference type="Pfam" id="PF00004">
    <property type="entry name" value="AAA"/>
    <property type="match status" value="1"/>
</dbReference>
<dbReference type="Pfam" id="PF17866">
    <property type="entry name" value="AAA_lid_6"/>
    <property type="match status" value="1"/>
</dbReference>
<dbReference type="Pfam" id="PF21545">
    <property type="entry name" value="T7SS_EccA1_N"/>
    <property type="match status" value="1"/>
</dbReference>
<dbReference type="PRINTS" id="PR00819">
    <property type="entry name" value="CBXCFQXSUPER"/>
</dbReference>
<dbReference type="SMART" id="SM00382">
    <property type="entry name" value="AAA"/>
    <property type="match status" value="1"/>
</dbReference>
<dbReference type="SUPFAM" id="SSF52540">
    <property type="entry name" value="P-loop containing nucleoside triphosphate hydrolases"/>
    <property type="match status" value="1"/>
</dbReference>
<organism>
    <name type="scientific">Mycobacterium tuberculosis (strain ATCC 25618 / H37Rv)</name>
    <dbReference type="NCBI Taxonomy" id="83332"/>
    <lineage>
        <taxon>Bacteria</taxon>
        <taxon>Bacillati</taxon>
        <taxon>Actinomycetota</taxon>
        <taxon>Actinomycetes</taxon>
        <taxon>Mycobacteriales</taxon>
        <taxon>Mycobacteriaceae</taxon>
        <taxon>Mycobacterium</taxon>
        <taxon>Mycobacterium tuberculosis complex</taxon>
    </lineage>
</organism>
<proteinExistence type="evidence at protein level"/>